<accession>Q86IV4</accession>
<accession>Q556C4</accession>
<gene>
    <name type="ORF">DDB_G0274775</name>
</gene>
<name>Y4775_DICDI</name>
<keyword id="KW-1185">Reference proteome</keyword>
<organism>
    <name type="scientific">Dictyostelium discoideum</name>
    <name type="common">Social amoeba</name>
    <dbReference type="NCBI Taxonomy" id="44689"/>
    <lineage>
        <taxon>Eukaryota</taxon>
        <taxon>Amoebozoa</taxon>
        <taxon>Evosea</taxon>
        <taxon>Eumycetozoa</taxon>
        <taxon>Dictyostelia</taxon>
        <taxon>Dictyosteliales</taxon>
        <taxon>Dictyosteliaceae</taxon>
        <taxon>Dictyostelium</taxon>
    </lineage>
</organism>
<sequence length="458" mass="51236">MSEPELKVSVSQLAPSDREGWLTKQGGSIRTWRRRWFVLKGKKLFYFKSKGDIEATGLIELEQNSFVKEEKDKDKKKKYMFTVGTSKRVFYIFAETETDMKQWMESIKRNLDGEGGMKSGGNDIVSSPKINSEPTPKVNQNGSAPEKSSLSSPRSKISNAKSIIPFLREEESKVLEFWQIWSESIPPQSDLQSGTAIEFHVATSIDMQKLTWRTAGPQNIFIQKMVDFFWNVGAPESEIDRLNDVGAIINPVKIGSWIDMSDKGGMDGGWYFPVDIPLKLAIEASDAGEPTRKLSEWAESNEVVNCYSIGRDMGAAPPRQTETRFKLPGPDFIAQLNLAVDAFKTFEFPPIPSNALEILYQSSNTLEAGGLCLSVITSSEGFVRLGLLIPKPTRDVVGQLCEIGQANRERISKFETALGGCGPAFVEFQYLQKGFGYTVYKEGFDIVFHYMVGEDQSE</sequence>
<proteinExistence type="predicted"/>
<reference key="1">
    <citation type="journal article" date="2002" name="Nature">
        <title>Sequence and analysis of chromosome 2 of Dictyostelium discoideum.</title>
        <authorList>
            <person name="Gloeckner G."/>
            <person name="Eichinger L."/>
            <person name="Szafranski K."/>
            <person name="Pachebat J.A."/>
            <person name="Bankier A.T."/>
            <person name="Dear P.H."/>
            <person name="Lehmann R."/>
            <person name="Baumgart C."/>
            <person name="Parra G."/>
            <person name="Abril J.F."/>
            <person name="Guigo R."/>
            <person name="Kumpf K."/>
            <person name="Tunggal B."/>
            <person name="Cox E.C."/>
            <person name="Quail M.A."/>
            <person name="Platzer M."/>
            <person name="Rosenthal A."/>
            <person name="Noegel A.A."/>
        </authorList>
    </citation>
    <scope>NUCLEOTIDE SEQUENCE [LARGE SCALE GENOMIC DNA]</scope>
    <source>
        <strain>AX4</strain>
    </source>
</reference>
<reference key="2">
    <citation type="journal article" date="2005" name="Nature">
        <title>The genome of the social amoeba Dictyostelium discoideum.</title>
        <authorList>
            <person name="Eichinger L."/>
            <person name="Pachebat J.A."/>
            <person name="Gloeckner G."/>
            <person name="Rajandream M.A."/>
            <person name="Sucgang R."/>
            <person name="Berriman M."/>
            <person name="Song J."/>
            <person name="Olsen R."/>
            <person name="Szafranski K."/>
            <person name="Xu Q."/>
            <person name="Tunggal B."/>
            <person name="Kummerfeld S."/>
            <person name="Madera M."/>
            <person name="Konfortov B.A."/>
            <person name="Rivero F."/>
            <person name="Bankier A.T."/>
            <person name="Lehmann R."/>
            <person name="Hamlin N."/>
            <person name="Davies R."/>
            <person name="Gaudet P."/>
            <person name="Fey P."/>
            <person name="Pilcher K."/>
            <person name="Chen G."/>
            <person name="Saunders D."/>
            <person name="Sodergren E.J."/>
            <person name="Davis P."/>
            <person name="Kerhornou A."/>
            <person name="Nie X."/>
            <person name="Hall N."/>
            <person name="Anjard C."/>
            <person name="Hemphill L."/>
            <person name="Bason N."/>
            <person name="Farbrother P."/>
            <person name="Desany B."/>
            <person name="Just E."/>
            <person name="Morio T."/>
            <person name="Rost R."/>
            <person name="Churcher C.M."/>
            <person name="Cooper J."/>
            <person name="Haydock S."/>
            <person name="van Driessche N."/>
            <person name="Cronin A."/>
            <person name="Goodhead I."/>
            <person name="Muzny D.M."/>
            <person name="Mourier T."/>
            <person name="Pain A."/>
            <person name="Lu M."/>
            <person name="Harper D."/>
            <person name="Lindsay R."/>
            <person name="Hauser H."/>
            <person name="James K.D."/>
            <person name="Quiles M."/>
            <person name="Madan Babu M."/>
            <person name="Saito T."/>
            <person name="Buchrieser C."/>
            <person name="Wardroper A."/>
            <person name="Felder M."/>
            <person name="Thangavelu M."/>
            <person name="Johnson D."/>
            <person name="Knights A."/>
            <person name="Loulseged H."/>
            <person name="Mungall K.L."/>
            <person name="Oliver K."/>
            <person name="Price C."/>
            <person name="Quail M.A."/>
            <person name="Urushihara H."/>
            <person name="Hernandez J."/>
            <person name="Rabbinowitsch E."/>
            <person name="Steffen D."/>
            <person name="Sanders M."/>
            <person name="Ma J."/>
            <person name="Kohara Y."/>
            <person name="Sharp S."/>
            <person name="Simmonds M.N."/>
            <person name="Spiegler S."/>
            <person name="Tivey A."/>
            <person name="Sugano S."/>
            <person name="White B."/>
            <person name="Walker D."/>
            <person name="Woodward J.R."/>
            <person name="Winckler T."/>
            <person name="Tanaka Y."/>
            <person name="Shaulsky G."/>
            <person name="Schleicher M."/>
            <person name="Weinstock G.M."/>
            <person name="Rosenthal A."/>
            <person name="Cox E.C."/>
            <person name="Chisholm R.L."/>
            <person name="Gibbs R.A."/>
            <person name="Loomis W.F."/>
            <person name="Platzer M."/>
            <person name="Kay R.R."/>
            <person name="Williams J.G."/>
            <person name="Dear P.H."/>
            <person name="Noegel A.A."/>
            <person name="Barrell B.G."/>
            <person name="Kuspa A."/>
        </authorList>
    </citation>
    <scope>NUCLEOTIDE SEQUENCE [LARGE SCALE GENOMIC DNA]</scope>
    <source>
        <strain>AX4</strain>
    </source>
</reference>
<protein>
    <recommendedName>
        <fullName>PH domain-containing protein DDB_G0274775</fullName>
    </recommendedName>
</protein>
<feature type="chain" id="PRO_0000368212" description="PH domain-containing protein DDB_G0274775">
    <location>
        <begin position="1"/>
        <end position="458"/>
    </location>
</feature>
<feature type="domain" description="PH" evidence="1">
    <location>
        <begin position="15"/>
        <end position="112"/>
    </location>
</feature>
<feature type="region of interest" description="Disordered" evidence="2">
    <location>
        <begin position="111"/>
        <end position="154"/>
    </location>
</feature>
<feature type="compositionally biased region" description="Polar residues" evidence="2">
    <location>
        <begin position="124"/>
        <end position="142"/>
    </location>
</feature>
<feature type="compositionally biased region" description="Low complexity" evidence="2">
    <location>
        <begin position="143"/>
        <end position="154"/>
    </location>
</feature>
<dbReference type="EMBL" id="AAFI02000012">
    <property type="protein sequence ID" value="EAL70280.1"/>
    <property type="molecule type" value="Genomic_DNA"/>
</dbReference>
<dbReference type="RefSeq" id="XP_643886.1">
    <property type="nucleotide sequence ID" value="XM_638794.1"/>
</dbReference>
<dbReference type="SMR" id="Q86IV4"/>
<dbReference type="FunCoup" id="Q86IV4">
    <property type="interactions" value="4"/>
</dbReference>
<dbReference type="PaxDb" id="44689-DDB0233285"/>
<dbReference type="EnsemblProtists" id="EAL70280">
    <property type="protein sequence ID" value="EAL70280"/>
    <property type="gene ID" value="DDB_G0274775"/>
</dbReference>
<dbReference type="GeneID" id="8619312"/>
<dbReference type="KEGG" id="ddi:DDB_G0274775"/>
<dbReference type="dictyBase" id="DDB_G0274775">
    <property type="gene designation" value="phdI"/>
</dbReference>
<dbReference type="VEuPathDB" id="AmoebaDB:DDB_G0274775"/>
<dbReference type="eggNOG" id="KOG1738">
    <property type="taxonomic scope" value="Eukaryota"/>
</dbReference>
<dbReference type="HOGENOM" id="CLU_566778_0_0_1"/>
<dbReference type="InParanoid" id="Q86IV4"/>
<dbReference type="OMA" id="CYSVGRD"/>
<dbReference type="PRO" id="PR:Q86IV4"/>
<dbReference type="Proteomes" id="UP000002195">
    <property type="component" value="Chromosome 2"/>
</dbReference>
<dbReference type="GO" id="GO:0031252">
    <property type="term" value="C:cell leading edge"/>
    <property type="evidence" value="ECO:0000314"/>
    <property type="project" value="dictyBase"/>
</dbReference>
<dbReference type="GO" id="GO:0005829">
    <property type="term" value="C:cytosol"/>
    <property type="evidence" value="ECO:0000314"/>
    <property type="project" value="dictyBase"/>
</dbReference>
<dbReference type="GO" id="GO:0005769">
    <property type="term" value="C:early endosome"/>
    <property type="evidence" value="ECO:0000318"/>
    <property type="project" value="GO_Central"/>
</dbReference>
<dbReference type="GO" id="GO:0005886">
    <property type="term" value="C:plasma membrane"/>
    <property type="evidence" value="ECO:0000314"/>
    <property type="project" value="dictyBase"/>
</dbReference>
<dbReference type="GO" id="GO:0055037">
    <property type="term" value="C:recycling endosome"/>
    <property type="evidence" value="ECO:0000318"/>
    <property type="project" value="GO_Central"/>
</dbReference>
<dbReference type="GO" id="GO:0005802">
    <property type="term" value="C:trans-Golgi network"/>
    <property type="evidence" value="ECO:0000318"/>
    <property type="project" value="GO_Central"/>
</dbReference>
<dbReference type="GO" id="GO:0005547">
    <property type="term" value="F:phosphatidylinositol-3,4,5-trisphosphate binding"/>
    <property type="evidence" value="ECO:0000314"/>
    <property type="project" value="dictyBase"/>
</dbReference>
<dbReference type="GO" id="GO:0007032">
    <property type="term" value="P:endosome organization"/>
    <property type="evidence" value="ECO:0000318"/>
    <property type="project" value="GO_Central"/>
</dbReference>
<dbReference type="GO" id="GO:0001881">
    <property type="term" value="P:receptor recycling"/>
    <property type="evidence" value="ECO:0000318"/>
    <property type="project" value="GO_Central"/>
</dbReference>
<dbReference type="GO" id="GO:0042147">
    <property type="term" value="P:retrograde transport, endosome to Golgi"/>
    <property type="evidence" value="ECO:0000318"/>
    <property type="project" value="GO_Central"/>
</dbReference>
<dbReference type="FunFam" id="2.30.29.30:FF:000286">
    <property type="entry name" value="PH-protein kinase domain containing protein"/>
    <property type="match status" value="1"/>
</dbReference>
<dbReference type="Gene3D" id="2.30.29.30">
    <property type="entry name" value="Pleckstrin-homology domain (PH domain)/Phosphotyrosine-binding domain (PTB)"/>
    <property type="match status" value="1"/>
</dbReference>
<dbReference type="InterPro" id="IPR045188">
    <property type="entry name" value="Boi1/Boi2-like"/>
</dbReference>
<dbReference type="InterPro" id="IPR011993">
    <property type="entry name" value="PH-like_dom_sf"/>
</dbReference>
<dbReference type="InterPro" id="IPR001849">
    <property type="entry name" value="PH_domain"/>
</dbReference>
<dbReference type="PANTHER" id="PTHR22902:SF39">
    <property type="entry name" value="PH DOMAIN-CONTAINING PROTEIN-RELATED"/>
    <property type="match status" value="1"/>
</dbReference>
<dbReference type="PANTHER" id="PTHR22902">
    <property type="entry name" value="SESQUIPEDALIAN"/>
    <property type="match status" value="1"/>
</dbReference>
<dbReference type="Pfam" id="PF00169">
    <property type="entry name" value="PH"/>
    <property type="match status" value="1"/>
</dbReference>
<dbReference type="SMART" id="SM00233">
    <property type="entry name" value="PH"/>
    <property type="match status" value="1"/>
</dbReference>
<dbReference type="SUPFAM" id="SSF50729">
    <property type="entry name" value="PH domain-like"/>
    <property type="match status" value="1"/>
</dbReference>
<dbReference type="PROSITE" id="PS50003">
    <property type="entry name" value="PH_DOMAIN"/>
    <property type="match status" value="1"/>
</dbReference>
<evidence type="ECO:0000255" key="1">
    <source>
        <dbReference type="PROSITE-ProRule" id="PRU00145"/>
    </source>
</evidence>
<evidence type="ECO:0000256" key="2">
    <source>
        <dbReference type="SAM" id="MobiDB-lite"/>
    </source>
</evidence>